<feature type="chain" id="PRO_0000209776" description="DegV domain-containing protein MYPU_3590">
    <location>
        <begin position="1"/>
        <end position="288"/>
    </location>
</feature>
<feature type="domain" description="DegV" evidence="3">
    <location>
        <begin position="3"/>
        <end position="275"/>
    </location>
</feature>
<feature type="binding site" evidence="2">
    <location>
        <position position="61"/>
    </location>
    <ligand>
        <name>hexadecanoate</name>
        <dbReference type="ChEBI" id="CHEBI:7896"/>
    </ligand>
</feature>
<feature type="binding site" evidence="2">
    <location>
        <position position="92"/>
    </location>
    <ligand>
        <name>hexadecanoate</name>
        <dbReference type="ChEBI" id="CHEBI:7896"/>
    </ligand>
</feature>
<comment type="function">
    <text evidence="1">May bind long-chain fatty acids, such as palmitate, and may play a role in lipid transport or fatty acid metabolism.</text>
</comment>
<proteinExistence type="inferred from homology"/>
<name>Y359_MYCPU</name>
<accession>Q98QK2</accession>
<keyword id="KW-0446">Lipid-binding</keyword>
<keyword id="KW-1185">Reference proteome</keyword>
<gene>
    <name type="ordered locus">MYPU_3590</name>
</gene>
<evidence type="ECO:0000250" key="1"/>
<evidence type="ECO:0000250" key="2">
    <source>
        <dbReference type="UniProtKB" id="Q9X1H9"/>
    </source>
</evidence>
<evidence type="ECO:0000255" key="3">
    <source>
        <dbReference type="PROSITE-ProRule" id="PRU00815"/>
    </source>
</evidence>
<protein>
    <recommendedName>
        <fullName>DegV domain-containing protein MYPU_3590</fullName>
    </recommendedName>
</protein>
<organism>
    <name type="scientific">Mycoplasmopsis pulmonis (strain UAB CTIP)</name>
    <name type="common">Mycoplasma pulmonis</name>
    <dbReference type="NCBI Taxonomy" id="272635"/>
    <lineage>
        <taxon>Bacteria</taxon>
        <taxon>Bacillati</taxon>
        <taxon>Mycoplasmatota</taxon>
        <taxon>Mycoplasmoidales</taxon>
        <taxon>Metamycoplasmataceae</taxon>
        <taxon>Mycoplasmopsis</taxon>
    </lineage>
</organism>
<sequence length="288" mass="32477">MKIAIVIDSSSGLTKEQANKRGWYFLPLNIDIDEKTYKDGIDLDNKNFFEIFKKNSKTSTSASSRGEIISLFDDITSKYDKVVVFPISYKLSSQYQNLDLIAREYKNIHIVKSKHLSFLTIVQLIKFEKAIGQNQSFDEELKKLSHWDESQKVLLIPEYNDALVAGGRLSPKAAALAKVLKVVPIIKFENGELLKEGKGISFQKTLTKLISSLSGKYSKDSKNYFPVILHAQNSNISFYEEHFLNEFGKKPLILSLPSVISVHTGLGAIAISLVKVDKDVIDQIVEHF</sequence>
<dbReference type="EMBL" id="AL445564">
    <property type="protein sequence ID" value="CAC13532.1"/>
    <property type="molecule type" value="Genomic_DNA"/>
</dbReference>
<dbReference type="PIR" id="G90556">
    <property type="entry name" value="G90556"/>
</dbReference>
<dbReference type="RefSeq" id="WP_010925163.1">
    <property type="nucleotide sequence ID" value="NC_002771.1"/>
</dbReference>
<dbReference type="SMR" id="Q98QK2"/>
<dbReference type="KEGG" id="mpu:MYPU_3590"/>
<dbReference type="eggNOG" id="COG1307">
    <property type="taxonomic scope" value="Bacteria"/>
</dbReference>
<dbReference type="HOGENOM" id="CLU_048251_3_0_14"/>
<dbReference type="BioCyc" id="MPUL272635:G1GT6-366-MONOMER"/>
<dbReference type="Proteomes" id="UP000000528">
    <property type="component" value="Chromosome"/>
</dbReference>
<dbReference type="GO" id="GO:0008289">
    <property type="term" value="F:lipid binding"/>
    <property type="evidence" value="ECO:0007669"/>
    <property type="project" value="UniProtKB-KW"/>
</dbReference>
<dbReference type="Gene3D" id="3.30.1180.10">
    <property type="match status" value="1"/>
</dbReference>
<dbReference type="Gene3D" id="3.40.50.10170">
    <property type="match status" value="1"/>
</dbReference>
<dbReference type="InterPro" id="IPR003797">
    <property type="entry name" value="DegV"/>
</dbReference>
<dbReference type="InterPro" id="IPR043168">
    <property type="entry name" value="DegV_C"/>
</dbReference>
<dbReference type="InterPro" id="IPR050270">
    <property type="entry name" value="DegV_domain_contain"/>
</dbReference>
<dbReference type="NCBIfam" id="TIGR00762">
    <property type="entry name" value="DegV"/>
    <property type="match status" value="1"/>
</dbReference>
<dbReference type="PANTHER" id="PTHR33434">
    <property type="entry name" value="DEGV DOMAIN-CONTAINING PROTEIN DR_1986-RELATED"/>
    <property type="match status" value="1"/>
</dbReference>
<dbReference type="PANTHER" id="PTHR33434:SF2">
    <property type="entry name" value="FATTY ACID-BINDING PROTEIN TM_1468"/>
    <property type="match status" value="1"/>
</dbReference>
<dbReference type="Pfam" id="PF02645">
    <property type="entry name" value="DegV"/>
    <property type="match status" value="1"/>
</dbReference>
<dbReference type="SUPFAM" id="SSF82549">
    <property type="entry name" value="DAK1/DegV-like"/>
    <property type="match status" value="1"/>
</dbReference>
<dbReference type="PROSITE" id="PS51482">
    <property type="entry name" value="DEGV"/>
    <property type="match status" value="1"/>
</dbReference>
<reference key="1">
    <citation type="journal article" date="2001" name="Nucleic Acids Res.">
        <title>The complete genome sequence of the murine respiratory pathogen Mycoplasma pulmonis.</title>
        <authorList>
            <person name="Chambaud I."/>
            <person name="Heilig R."/>
            <person name="Ferris S."/>
            <person name="Barbe V."/>
            <person name="Samson D."/>
            <person name="Galisson F."/>
            <person name="Moszer I."/>
            <person name="Dybvig K."/>
            <person name="Wroblewski H."/>
            <person name="Viari A."/>
            <person name="Rocha E.P.C."/>
            <person name="Blanchard A."/>
        </authorList>
    </citation>
    <scope>NUCLEOTIDE SEQUENCE [LARGE SCALE GENOMIC DNA]</scope>
    <source>
        <strain>UAB CTIP</strain>
    </source>
</reference>